<proteinExistence type="inferred from homology"/>
<organism>
    <name type="scientific">Klebsiella pneumoniae (strain 342)</name>
    <dbReference type="NCBI Taxonomy" id="507522"/>
    <lineage>
        <taxon>Bacteria</taxon>
        <taxon>Pseudomonadati</taxon>
        <taxon>Pseudomonadota</taxon>
        <taxon>Gammaproteobacteria</taxon>
        <taxon>Enterobacterales</taxon>
        <taxon>Enterobacteriaceae</taxon>
        <taxon>Klebsiella/Raoultella group</taxon>
        <taxon>Klebsiella</taxon>
        <taxon>Klebsiella pneumoniae complex</taxon>
    </lineage>
</organism>
<comment type="similarity">
    <text evidence="1">Belongs to the bacterial ribosomal protein bS21 family.</text>
</comment>
<reference key="1">
    <citation type="journal article" date="2008" name="PLoS Genet.">
        <title>Complete genome sequence of the N2-fixing broad host range endophyte Klebsiella pneumoniae 342 and virulence predictions verified in mice.</title>
        <authorList>
            <person name="Fouts D.E."/>
            <person name="Tyler H.L."/>
            <person name="DeBoy R.T."/>
            <person name="Daugherty S."/>
            <person name="Ren Q."/>
            <person name="Badger J.H."/>
            <person name="Durkin A.S."/>
            <person name="Huot H."/>
            <person name="Shrivastava S."/>
            <person name="Kothari S."/>
            <person name="Dodson R.J."/>
            <person name="Mohamoud Y."/>
            <person name="Khouri H."/>
            <person name="Roesch L.F.W."/>
            <person name="Krogfelt K.A."/>
            <person name="Struve C."/>
            <person name="Triplett E.W."/>
            <person name="Methe B.A."/>
        </authorList>
    </citation>
    <scope>NUCLEOTIDE SEQUENCE [LARGE SCALE GENOMIC DNA]</scope>
    <source>
        <strain>342</strain>
    </source>
</reference>
<sequence>MPVIKVRENEPFDVALRRFKRSCEKAGVLAEVRRREFYEKPTTERKRAKASAVKRHAKKLARENARRTRLY</sequence>
<keyword id="KW-0687">Ribonucleoprotein</keyword>
<keyword id="KW-0689">Ribosomal protein</keyword>
<name>RS21_KLEP3</name>
<feature type="chain" id="PRO_1000120631" description="Small ribosomal subunit protein bS21">
    <location>
        <begin position="1"/>
        <end position="71"/>
    </location>
</feature>
<feature type="region of interest" description="Disordered" evidence="2">
    <location>
        <begin position="43"/>
        <end position="71"/>
    </location>
</feature>
<feature type="compositionally biased region" description="Basic residues" evidence="2">
    <location>
        <begin position="46"/>
        <end position="59"/>
    </location>
</feature>
<feature type="compositionally biased region" description="Basic and acidic residues" evidence="2">
    <location>
        <begin position="60"/>
        <end position="71"/>
    </location>
</feature>
<evidence type="ECO:0000255" key="1">
    <source>
        <dbReference type="HAMAP-Rule" id="MF_00358"/>
    </source>
</evidence>
<evidence type="ECO:0000256" key="2">
    <source>
        <dbReference type="SAM" id="MobiDB-lite"/>
    </source>
</evidence>
<evidence type="ECO:0000305" key="3"/>
<accession>B5XU21</accession>
<dbReference type="EMBL" id="CP000964">
    <property type="protein sequence ID" value="ACI07695.1"/>
    <property type="molecule type" value="Genomic_DNA"/>
</dbReference>
<dbReference type="SMR" id="B5XU21"/>
<dbReference type="KEGG" id="kpe:KPK_0646"/>
<dbReference type="HOGENOM" id="CLU_159258_1_0_6"/>
<dbReference type="Proteomes" id="UP000001734">
    <property type="component" value="Chromosome"/>
</dbReference>
<dbReference type="GO" id="GO:1990904">
    <property type="term" value="C:ribonucleoprotein complex"/>
    <property type="evidence" value="ECO:0007669"/>
    <property type="project" value="UniProtKB-KW"/>
</dbReference>
<dbReference type="GO" id="GO:0005840">
    <property type="term" value="C:ribosome"/>
    <property type="evidence" value="ECO:0007669"/>
    <property type="project" value="UniProtKB-KW"/>
</dbReference>
<dbReference type="GO" id="GO:0003735">
    <property type="term" value="F:structural constituent of ribosome"/>
    <property type="evidence" value="ECO:0007669"/>
    <property type="project" value="InterPro"/>
</dbReference>
<dbReference type="GO" id="GO:0006412">
    <property type="term" value="P:translation"/>
    <property type="evidence" value="ECO:0007669"/>
    <property type="project" value="UniProtKB-UniRule"/>
</dbReference>
<dbReference type="FunFam" id="1.20.5.1150:FF:000001">
    <property type="entry name" value="30S ribosomal protein S21"/>
    <property type="match status" value="1"/>
</dbReference>
<dbReference type="Gene3D" id="1.20.5.1150">
    <property type="entry name" value="Ribosomal protein S8"/>
    <property type="match status" value="1"/>
</dbReference>
<dbReference type="HAMAP" id="MF_00358">
    <property type="entry name" value="Ribosomal_bS21"/>
    <property type="match status" value="1"/>
</dbReference>
<dbReference type="InterPro" id="IPR001911">
    <property type="entry name" value="Ribosomal_bS21"/>
</dbReference>
<dbReference type="InterPro" id="IPR018278">
    <property type="entry name" value="Ribosomal_bS21_CS"/>
</dbReference>
<dbReference type="InterPro" id="IPR038380">
    <property type="entry name" value="Ribosomal_bS21_sf"/>
</dbReference>
<dbReference type="NCBIfam" id="TIGR00030">
    <property type="entry name" value="S21p"/>
    <property type="match status" value="1"/>
</dbReference>
<dbReference type="PANTHER" id="PTHR21109">
    <property type="entry name" value="MITOCHONDRIAL 28S RIBOSOMAL PROTEIN S21"/>
    <property type="match status" value="1"/>
</dbReference>
<dbReference type="PANTHER" id="PTHR21109:SF22">
    <property type="entry name" value="SMALL RIBOSOMAL SUBUNIT PROTEIN BS21"/>
    <property type="match status" value="1"/>
</dbReference>
<dbReference type="Pfam" id="PF01165">
    <property type="entry name" value="Ribosomal_S21"/>
    <property type="match status" value="1"/>
</dbReference>
<dbReference type="PRINTS" id="PR00976">
    <property type="entry name" value="RIBOSOMALS21"/>
</dbReference>
<dbReference type="PROSITE" id="PS01181">
    <property type="entry name" value="RIBOSOMAL_S21"/>
    <property type="match status" value="1"/>
</dbReference>
<gene>
    <name evidence="1" type="primary">rpsU</name>
    <name type="ordered locus">KPK_0646</name>
</gene>
<protein>
    <recommendedName>
        <fullName evidence="1">Small ribosomal subunit protein bS21</fullName>
    </recommendedName>
    <alternativeName>
        <fullName evidence="3">30S ribosomal protein S21</fullName>
    </alternativeName>
</protein>